<keyword id="KW-0413">Isomerase</keyword>
<keyword id="KW-1185">Reference proteome</keyword>
<keyword id="KW-0819">tRNA processing</keyword>
<comment type="function">
    <text evidence="1">Formation of pseudouridine at positions 38, 39 and 40 in the anticodon stem and loop of transfer RNAs.</text>
</comment>
<comment type="catalytic activity">
    <reaction evidence="1">
        <text>uridine(38/39/40) in tRNA = pseudouridine(38/39/40) in tRNA</text>
        <dbReference type="Rhea" id="RHEA:22376"/>
        <dbReference type="Rhea" id="RHEA-COMP:10085"/>
        <dbReference type="Rhea" id="RHEA-COMP:10087"/>
        <dbReference type="ChEBI" id="CHEBI:65314"/>
        <dbReference type="ChEBI" id="CHEBI:65315"/>
        <dbReference type="EC" id="5.4.99.12"/>
    </reaction>
</comment>
<comment type="subunit">
    <text evidence="1">Homodimer.</text>
</comment>
<comment type="similarity">
    <text evidence="1">Belongs to the tRNA pseudouridine synthase TruA family.</text>
</comment>
<reference key="1">
    <citation type="journal article" date="2011" name="J. Bacteriol.">
        <title>Genome of Ochrobactrum anthropi ATCC 49188 T, a versatile opportunistic pathogen and symbiont of several eukaryotic hosts.</title>
        <authorList>
            <person name="Chain P.S."/>
            <person name="Lang D.M."/>
            <person name="Comerci D.J."/>
            <person name="Malfatti S.A."/>
            <person name="Vergez L.M."/>
            <person name="Shin M."/>
            <person name="Ugalde R.A."/>
            <person name="Garcia E."/>
            <person name="Tolmasky M.E."/>
        </authorList>
    </citation>
    <scope>NUCLEOTIDE SEQUENCE [LARGE SCALE GENOMIC DNA]</scope>
    <source>
        <strain>ATCC 49188 / DSM 6882 / CCUG 24695 / JCM 21032 / LMG 3331 / NBRC 15819 / NCTC 12168 / Alc 37</strain>
    </source>
</reference>
<proteinExistence type="inferred from homology"/>
<sequence length="251" mass="28374">MPRYKLTVEYDGTPYVGWQRQENGHAVQNAIELAFKKFCGEDLTLSAAGRTDAGVHATAQVVHVDLTKDWGAGKVRDAVNAHLVMADERVSILNVERTTDTFDARFSARARHYLYRIHNRRAPLAVDYQRAWWVQKRLDAEAMHEAAKRLLGEHDFTTFRATQCQAKSPVKTLDRLDVIRNGDYVEMRVSARSFLHNQVRSFAGSLMEVGVGRWTADDLQAALEAKDRKACGQVAPPYGLYLIGVDYAFPY</sequence>
<feature type="chain" id="PRO_1000017126" description="tRNA pseudouridine synthase A">
    <location>
        <begin position="1"/>
        <end position="251"/>
    </location>
</feature>
<feature type="active site" description="Nucleophile" evidence="1">
    <location>
        <position position="52"/>
    </location>
</feature>
<feature type="binding site" evidence="1">
    <location>
        <position position="113"/>
    </location>
    <ligand>
        <name>substrate</name>
    </ligand>
</feature>
<protein>
    <recommendedName>
        <fullName evidence="1">tRNA pseudouridine synthase A</fullName>
        <ecNumber evidence="1">5.4.99.12</ecNumber>
    </recommendedName>
    <alternativeName>
        <fullName evidence="1">tRNA pseudouridine(38-40) synthase</fullName>
    </alternativeName>
    <alternativeName>
        <fullName evidence="1">tRNA pseudouridylate synthase I</fullName>
    </alternativeName>
    <alternativeName>
        <fullName evidence="1">tRNA-uridine isomerase I</fullName>
    </alternativeName>
</protein>
<accession>A6WYK9</accession>
<organism>
    <name type="scientific">Brucella anthropi (strain ATCC 49188 / DSM 6882 / CCUG 24695 / JCM 21032 / LMG 3331 / NBRC 15819 / NCTC 12168 / Alc 37)</name>
    <name type="common">Ochrobactrum anthropi</name>
    <dbReference type="NCBI Taxonomy" id="439375"/>
    <lineage>
        <taxon>Bacteria</taxon>
        <taxon>Pseudomonadati</taxon>
        <taxon>Pseudomonadota</taxon>
        <taxon>Alphaproteobacteria</taxon>
        <taxon>Hyphomicrobiales</taxon>
        <taxon>Brucellaceae</taxon>
        <taxon>Brucella/Ochrobactrum group</taxon>
        <taxon>Brucella</taxon>
    </lineage>
</organism>
<dbReference type="EC" id="5.4.99.12" evidence="1"/>
<dbReference type="EMBL" id="CP000758">
    <property type="protein sequence ID" value="ABS14063.1"/>
    <property type="molecule type" value="Genomic_DNA"/>
</dbReference>
<dbReference type="RefSeq" id="WP_012091437.1">
    <property type="nucleotide sequence ID" value="NC_009667.1"/>
</dbReference>
<dbReference type="SMR" id="A6WYK9"/>
<dbReference type="STRING" id="439375.Oant_1346"/>
<dbReference type="KEGG" id="oan:Oant_1346"/>
<dbReference type="PATRIC" id="fig|439375.7.peg.1411"/>
<dbReference type="eggNOG" id="COG0101">
    <property type="taxonomic scope" value="Bacteria"/>
</dbReference>
<dbReference type="HOGENOM" id="CLU_014673_0_2_5"/>
<dbReference type="PhylomeDB" id="A6WYK9"/>
<dbReference type="Proteomes" id="UP000002301">
    <property type="component" value="Chromosome 1"/>
</dbReference>
<dbReference type="GO" id="GO:0003723">
    <property type="term" value="F:RNA binding"/>
    <property type="evidence" value="ECO:0007669"/>
    <property type="project" value="InterPro"/>
</dbReference>
<dbReference type="GO" id="GO:0160147">
    <property type="term" value="F:tRNA pseudouridine(38-40) synthase activity"/>
    <property type="evidence" value="ECO:0007669"/>
    <property type="project" value="UniProtKB-EC"/>
</dbReference>
<dbReference type="GO" id="GO:0031119">
    <property type="term" value="P:tRNA pseudouridine synthesis"/>
    <property type="evidence" value="ECO:0007669"/>
    <property type="project" value="UniProtKB-UniRule"/>
</dbReference>
<dbReference type="CDD" id="cd02570">
    <property type="entry name" value="PseudoU_synth_EcTruA"/>
    <property type="match status" value="1"/>
</dbReference>
<dbReference type="FunFam" id="3.30.70.580:FF:000001">
    <property type="entry name" value="tRNA pseudouridine synthase A"/>
    <property type="match status" value="1"/>
</dbReference>
<dbReference type="Gene3D" id="3.30.70.660">
    <property type="entry name" value="Pseudouridine synthase I, catalytic domain, C-terminal subdomain"/>
    <property type="match status" value="1"/>
</dbReference>
<dbReference type="Gene3D" id="3.30.70.580">
    <property type="entry name" value="Pseudouridine synthase I, catalytic domain, N-terminal subdomain"/>
    <property type="match status" value="1"/>
</dbReference>
<dbReference type="HAMAP" id="MF_00171">
    <property type="entry name" value="TruA"/>
    <property type="match status" value="1"/>
</dbReference>
<dbReference type="InterPro" id="IPR020103">
    <property type="entry name" value="PsdUridine_synth_cat_dom_sf"/>
</dbReference>
<dbReference type="InterPro" id="IPR001406">
    <property type="entry name" value="PsdUridine_synth_TruA"/>
</dbReference>
<dbReference type="InterPro" id="IPR020097">
    <property type="entry name" value="PsdUridine_synth_TruA_a/b_dom"/>
</dbReference>
<dbReference type="InterPro" id="IPR020095">
    <property type="entry name" value="PsdUridine_synth_TruA_C"/>
</dbReference>
<dbReference type="InterPro" id="IPR020094">
    <property type="entry name" value="TruA/RsuA/RluB/E/F_N"/>
</dbReference>
<dbReference type="NCBIfam" id="TIGR00071">
    <property type="entry name" value="hisT_truA"/>
    <property type="match status" value="1"/>
</dbReference>
<dbReference type="PANTHER" id="PTHR11142">
    <property type="entry name" value="PSEUDOURIDYLATE SYNTHASE"/>
    <property type="match status" value="1"/>
</dbReference>
<dbReference type="PANTHER" id="PTHR11142:SF0">
    <property type="entry name" value="TRNA PSEUDOURIDINE SYNTHASE-LIKE 1"/>
    <property type="match status" value="1"/>
</dbReference>
<dbReference type="Pfam" id="PF01416">
    <property type="entry name" value="PseudoU_synth_1"/>
    <property type="match status" value="2"/>
</dbReference>
<dbReference type="PIRSF" id="PIRSF001430">
    <property type="entry name" value="tRNA_psdUrid_synth"/>
    <property type="match status" value="1"/>
</dbReference>
<dbReference type="SUPFAM" id="SSF55120">
    <property type="entry name" value="Pseudouridine synthase"/>
    <property type="match status" value="1"/>
</dbReference>
<name>TRUA_BRUA4</name>
<gene>
    <name evidence="1" type="primary">truA</name>
    <name type="ordered locus">Oant_1346</name>
</gene>
<evidence type="ECO:0000255" key="1">
    <source>
        <dbReference type="HAMAP-Rule" id="MF_00171"/>
    </source>
</evidence>